<protein>
    <recommendedName>
        <fullName evidence="1">Serine--tRNA ligase</fullName>
        <ecNumber evidence="1">6.1.1.11</ecNumber>
    </recommendedName>
    <alternativeName>
        <fullName evidence="1">Seryl-tRNA synthetase</fullName>
        <shortName evidence="1">SerRS</shortName>
    </alternativeName>
    <alternativeName>
        <fullName evidence="1">Seryl-tRNA(Ser/Sec) synthetase</fullName>
    </alternativeName>
</protein>
<dbReference type="EC" id="6.1.1.11" evidence="1"/>
<dbReference type="EMBL" id="CP001615">
    <property type="protein sequence ID" value="ACQ70641.1"/>
    <property type="molecule type" value="Genomic_DNA"/>
</dbReference>
<dbReference type="RefSeq" id="WP_012727759.1">
    <property type="nucleotide sequence ID" value="NC_012673.1"/>
</dbReference>
<dbReference type="SMR" id="C4KZX8"/>
<dbReference type="STRING" id="360911.EAT1b_1715"/>
<dbReference type="GeneID" id="94370634"/>
<dbReference type="KEGG" id="eat:EAT1b_1715"/>
<dbReference type="eggNOG" id="COG0172">
    <property type="taxonomic scope" value="Bacteria"/>
</dbReference>
<dbReference type="HOGENOM" id="CLU_023797_1_1_9"/>
<dbReference type="OrthoDB" id="9804647at2"/>
<dbReference type="UniPathway" id="UPA00906">
    <property type="reaction ID" value="UER00895"/>
</dbReference>
<dbReference type="Proteomes" id="UP000000716">
    <property type="component" value="Chromosome"/>
</dbReference>
<dbReference type="GO" id="GO:0005737">
    <property type="term" value="C:cytoplasm"/>
    <property type="evidence" value="ECO:0007669"/>
    <property type="project" value="UniProtKB-SubCell"/>
</dbReference>
<dbReference type="GO" id="GO:0005524">
    <property type="term" value="F:ATP binding"/>
    <property type="evidence" value="ECO:0007669"/>
    <property type="project" value="UniProtKB-UniRule"/>
</dbReference>
<dbReference type="GO" id="GO:0140096">
    <property type="term" value="F:catalytic activity, acting on a protein"/>
    <property type="evidence" value="ECO:0007669"/>
    <property type="project" value="UniProtKB-ARBA"/>
</dbReference>
<dbReference type="GO" id="GO:0004828">
    <property type="term" value="F:serine-tRNA ligase activity"/>
    <property type="evidence" value="ECO:0007669"/>
    <property type="project" value="UniProtKB-UniRule"/>
</dbReference>
<dbReference type="GO" id="GO:0016740">
    <property type="term" value="F:transferase activity"/>
    <property type="evidence" value="ECO:0007669"/>
    <property type="project" value="UniProtKB-ARBA"/>
</dbReference>
<dbReference type="GO" id="GO:0016260">
    <property type="term" value="P:selenocysteine biosynthetic process"/>
    <property type="evidence" value="ECO:0007669"/>
    <property type="project" value="UniProtKB-UniRule"/>
</dbReference>
<dbReference type="GO" id="GO:0006434">
    <property type="term" value="P:seryl-tRNA aminoacylation"/>
    <property type="evidence" value="ECO:0007669"/>
    <property type="project" value="UniProtKB-UniRule"/>
</dbReference>
<dbReference type="CDD" id="cd00770">
    <property type="entry name" value="SerRS_core"/>
    <property type="match status" value="1"/>
</dbReference>
<dbReference type="Gene3D" id="3.30.930.10">
    <property type="entry name" value="Bira Bifunctional Protein, Domain 2"/>
    <property type="match status" value="1"/>
</dbReference>
<dbReference type="Gene3D" id="1.10.287.40">
    <property type="entry name" value="Serine-tRNA synthetase, tRNA binding domain"/>
    <property type="match status" value="1"/>
</dbReference>
<dbReference type="HAMAP" id="MF_00176">
    <property type="entry name" value="Ser_tRNA_synth_type1"/>
    <property type="match status" value="1"/>
</dbReference>
<dbReference type="InterPro" id="IPR002314">
    <property type="entry name" value="aa-tRNA-synt_IIb"/>
</dbReference>
<dbReference type="InterPro" id="IPR006195">
    <property type="entry name" value="aa-tRNA-synth_II"/>
</dbReference>
<dbReference type="InterPro" id="IPR045864">
    <property type="entry name" value="aa-tRNA-synth_II/BPL/LPL"/>
</dbReference>
<dbReference type="InterPro" id="IPR002317">
    <property type="entry name" value="Ser-tRNA-ligase_type_1"/>
</dbReference>
<dbReference type="InterPro" id="IPR015866">
    <property type="entry name" value="Ser-tRNA-synth_1_N"/>
</dbReference>
<dbReference type="InterPro" id="IPR042103">
    <property type="entry name" value="SerRS_1_N_sf"/>
</dbReference>
<dbReference type="InterPro" id="IPR033729">
    <property type="entry name" value="SerRS_core"/>
</dbReference>
<dbReference type="InterPro" id="IPR010978">
    <property type="entry name" value="tRNA-bd_arm"/>
</dbReference>
<dbReference type="NCBIfam" id="TIGR00414">
    <property type="entry name" value="serS"/>
    <property type="match status" value="1"/>
</dbReference>
<dbReference type="PANTHER" id="PTHR43697:SF1">
    <property type="entry name" value="SERINE--TRNA LIGASE"/>
    <property type="match status" value="1"/>
</dbReference>
<dbReference type="PANTHER" id="PTHR43697">
    <property type="entry name" value="SERYL-TRNA SYNTHETASE"/>
    <property type="match status" value="1"/>
</dbReference>
<dbReference type="Pfam" id="PF02403">
    <property type="entry name" value="Seryl_tRNA_N"/>
    <property type="match status" value="1"/>
</dbReference>
<dbReference type="Pfam" id="PF00587">
    <property type="entry name" value="tRNA-synt_2b"/>
    <property type="match status" value="1"/>
</dbReference>
<dbReference type="PIRSF" id="PIRSF001529">
    <property type="entry name" value="Ser-tRNA-synth_IIa"/>
    <property type="match status" value="1"/>
</dbReference>
<dbReference type="PRINTS" id="PR00981">
    <property type="entry name" value="TRNASYNTHSER"/>
</dbReference>
<dbReference type="SUPFAM" id="SSF55681">
    <property type="entry name" value="Class II aaRS and biotin synthetases"/>
    <property type="match status" value="1"/>
</dbReference>
<dbReference type="SUPFAM" id="SSF46589">
    <property type="entry name" value="tRNA-binding arm"/>
    <property type="match status" value="1"/>
</dbReference>
<dbReference type="PROSITE" id="PS50862">
    <property type="entry name" value="AA_TRNA_LIGASE_II"/>
    <property type="match status" value="1"/>
</dbReference>
<keyword id="KW-0030">Aminoacyl-tRNA synthetase</keyword>
<keyword id="KW-0067">ATP-binding</keyword>
<keyword id="KW-0963">Cytoplasm</keyword>
<keyword id="KW-0436">Ligase</keyword>
<keyword id="KW-0547">Nucleotide-binding</keyword>
<keyword id="KW-0648">Protein biosynthesis</keyword>
<accession>C4KZX8</accession>
<sequence length="427" mass="48695">MLDIKRLRQDFEGIKEKLAHRGEDLSALDRFPQLEEKRRDLINEVEVKKAKRNEATKQIAELKRNKEDAEGPILETRRLGDEIKLLDEELREVEAELNLILLSIPNIPHESTPIGETEDDNVTIREIGTKPEFDFEPKQHWDVMEDLQIVDVERAGKVTGSRFVFYKGLGARLERALINFMMDLHSDEHGYAEVLPPYMVNRDSMTGTGQLPKFEEDAFKVADTNYFLVPTAEVPVTNMHREEILPETQLPIAYTAYSANFRSEAGSAGRDTRGLIRQHQFNKVELVRFVKPEESYEQLELLTGHAEEVLKRLGLPYQVLSMCTADLGFTAAKKYDIEVWMPAQGVYREISSCSNFEDFQARRAGIRFRRDANAKPEFVHTLNGSGLAVGRTVAAILENYQQADGSVVIPEVLRPYMGGKEKIEMPN</sequence>
<gene>
    <name evidence="1" type="primary">serS</name>
    <name type="ordered locus">EAT1b_1715</name>
</gene>
<proteinExistence type="inferred from homology"/>
<organism>
    <name type="scientific">Exiguobacterium sp. (strain ATCC BAA-1283 / AT1b)</name>
    <dbReference type="NCBI Taxonomy" id="360911"/>
    <lineage>
        <taxon>Bacteria</taxon>
        <taxon>Bacillati</taxon>
        <taxon>Bacillota</taxon>
        <taxon>Bacilli</taxon>
        <taxon>Bacillales</taxon>
        <taxon>Bacillales Family XII. Incertae Sedis</taxon>
        <taxon>Exiguobacterium</taxon>
    </lineage>
</organism>
<feature type="chain" id="PRO_1000203756" description="Serine--tRNA ligase">
    <location>
        <begin position="1"/>
        <end position="427"/>
    </location>
</feature>
<feature type="binding site" evidence="1">
    <location>
        <begin position="231"/>
        <end position="233"/>
    </location>
    <ligand>
        <name>L-serine</name>
        <dbReference type="ChEBI" id="CHEBI:33384"/>
    </ligand>
</feature>
<feature type="binding site" evidence="1">
    <location>
        <begin position="262"/>
        <end position="264"/>
    </location>
    <ligand>
        <name>ATP</name>
        <dbReference type="ChEBI" id="CHEBI:30616"/>
    </ligand>
</feature>
<feature type="binding site" evidence="1">
    <location>
        <position position="285"/>
    </location>
    <ligand>
        <name>L-serine</name>
        <dbReference type="ChEBI" id="CHEBI:33384"/>
    </ligand>
</feature>
<feature type="binding site" evidence="1">
    <location>
        <begin position="349"/>
        <end position="352"/>
    </location>
    <ligand>
        <name>ATP</name>
        <dbReference type="ChEBI" id="CHEBI:30616"/>
    </ligand>
</feature>
<feature type="binding site" evidence="1">
    <location>
        <position position="385"/>
    </location>
    <ligand>
        <name>L-serine</name>
        <dbReference type="ChEBI" id="CHEBI:33384"/>
    </ligand>
</feature>
<evidence type="ECO:0000255" key="1">
    <source>
        <dbReference type="HAMAP-Rule" id="MF_00176"/>
    </source>
</evidence>
<name>SYS_EXISA</name>
<comment type="function">
    <text evidence="1">Catalyzes the attachment of serine to tRNA(Ser). Is also able to aminoacylate tRNA(Sec) with serine, to form the misacylated tRNA L-seryl-tRNA(Sec), which will be further converted into selenocysteinyl-tRNA(Sec).</text>
</comment>
<comment type="catalytic activity">
    <reaction evidence="1">
        <text>tRNA(Ser) + L-serine + ATP = L-seryl-tRNA(Ser) + AMP + diphosphate + H(+)</text>
        <dbReference type="Rhea" id="RHEA:12292"/>
        <dbReference type="Rhea" id="RHEA-COMP:9669"/>
        <dbReference type="Rhea" id="RHEA-COMP:9703"/>
        <dbReference type="ChEBI" id="CHEBI:15378"/>
        <dbReference type="ChEBI" id="CHEBI:30616"/>
        <dbReference type="ChEBI" id="CHEBI:33019"/>
        <dbReference type="ChEBI" id="CHEBI:33384"/>
        <dbReference type="ChEBI" id="CHEBI:78442"/>
        <dbReference type="ChEBI" id="CHEBI:78533"/>
        <dbReference type="ChEBI" id="CHEBI:456215"/>
        <dbReference type="EC" id="6.1.1.11"/>
    </reaction>
</comment>
<comment type="catalytic activity">
    <reaction evidence="1">
        <text>tRNA(Sec) + L-serine + ATP = L-seryl-tRNA(Sec) + AMP + diphosphate + H(+)</text>
        <dbReference type="Rhea" id="RHEA:42580"/>
        <dbReference type="Rhea" id="RHEA-COMP:9742"/>
        <dbReference type="Rhea" id="RHEA-COMP:10128"/>
        <dbReference type="ChEBI" id="CHEBI:15378"/>
        <dbReference type="ChEBI" id="CHEBI:30616"/>
        <dbReference type="ChEBI" id="CHEBI:33019"/>
        <dbReference type="ChEBI" id="CHEBI:33384"/>
        <dbReference type="ChEBI" id="CHEBI:78442"/>
        <dbReference type="ChEBI" id="CHEBI:78533"/>
        <dbReference type="ChEBI" id="CHEBI:456215"/>
        <dbReference type="EC" id="6.1.1.11"/>
    </reaction>
</comment>
<comment type="pathway">
    <text evidence="1">Aminoacyl-tRNA biosynthesis; selenocysteinyl-tRNA(Sec) biosynthesis; L-seryl-tRNA(Sec) from L-serine and tRNA(Sec): step 1/1.</text>
</comment>
<comment type="subunit">
    <text evidence="1">Homodimer. The tRNA molecule binds across the dimer.</text>
</comment>
<comment type="subcellular location">
    <subcellularLocation>
        <location evidence="1">Cytoplasm</location>
    </subcellularLocation>
</comment>
<comment type="domain">
    <text evidence="1">Consists of two distinct domains, a catalytic core and a N-terminal extension that is involved in tRNA binding.</text>
</comment>
<comment type="similarity">
    <text evidence="1">Belongs to the class-II aminoacyl-tRNA synthetase family. Type-1 seryl-tRNA synthetase subfamily.</text>
</comment>
<reference key="1">
    <citation type="journal article" date="2011" name="J. Bacteriol.">
        <title>Complete genome sequence of the Thermophilic Bacterium Exiguobacterium sp. AT1b.</title>
        <authorList>
            <person name="Vishnivetskaya T.A."/>
            <person name="Lucas S."/>
            <person name="Copeland A."/>
            <person name="Lapidus A."/>
            <person name="Glavina del Rio T."/>
            <person name="Dalin E."/>
            <person name="Tice H."/>
            <person name="Bruce D.C."/>
            <person name="Goodwin L.A."/>
            <person name="Pitluck S."/>
            <person name="Saunders E."/>
            <person name="Brettin T."/>
            <person name="Detter C."/>
            <person name="Han C."/>
            <person name="Larimer F."/>
            <person name="Land M.L."/>
            <person name="Hauser L.J."/>
            <person name="Kyrpides N.C."/>
            <person name="Ovchinnikova G."/>
            <person name="Kathariou S."/>
            <person name="Ramaley R.F."/>
            <person name="Rodrigues D.F."/>
            <person name="Hendrix C."/>
            <person name="Richardson P."/>
            <person name="Tiedje J.M."/>
        </authorList>
    </citation>
    <scope>NUCLEOTIDE SEQUENCE [LARGE SCALE GENOMIC DNA]</scope>
    <source>
        <strain>ATCC BAA-1283 / AT1b</strain>
    </source>
</reference>